<organism>
    <name type="scientific">Prochlorococcus marinus (strain MIT 9312)</name>
    <dbReference type="NCBI Taxonomy" id="74546"/>
    <lineage>
        <taxon>Bacteria</taxon>
        <taxon>Bacillati</taxon>
        <taxon>Cyanobacteriota</taxon>
        <taxon>Cyanophyceae</taxon>
        <taxon>Synechococcales</taxon>
        <taxon>Prochlorococcaceae</taxon>
        <taxon>Prochlorococcus</taxon>
    </lineage>
</organism>
<accession>Q31BW9</accession>
<sequence>MQAINPIWAEVQKSLQKTLSKPSFETWIRPAKFNCFENGLLTLIAPNTFSSDWLRKNYCETIEKTAKEICGYDVKVIFKSETNINSYLTNKENLDEKKVDHKTKSFSNNSQDISSKNRSKKPNGLNLRYVFKRFVVGPNSRLAHAAALAVAESPGREFNPLFICGGVGLGKTHLMQAIGHYRVEIDPEAKVKYVSTETFTNDVISGIRRDGMTAIRDKYRNVDLILIDDIQFLEGKEYTQEEFFHTFNALHESGSQIVIASDRPPNQLSGIQERLISRFSMGMTADIQPPDLETRTAILQKKAEQERMNLPRDLIQFIAGRFTSNIRELEGAFTRAVAFASITGLPMTVQSIAPMLDPNSVGVVVTPKQVINKVSDFFKVSTDELISSSRRKPVSQARQIGMYLMRQGTDLSLPRIGDEFGGKDHTTVMYAIEQVEKKLSIDPNIASQVQKIRDLLQIDSRKNL</sequence>
<keyword id="KW-0067">ATP-binding</keyword>
<keyword id="KW-0963">Cytoplasm</keyword>
<keyword id="KW-0235">DNA replication</keyword>
<keyword id="KW-0238">DNA-binding</keyword>
<keyword id="KW-0446">Lipid-binding</keyword>
<keyword id="KW-0547">Nucleotide-binding</keyword>
<evidence type="ECO:0000255" key="1">
    <source>
        <dbReference type="HAMAP-Rule" id="MF_00377"/>
    </source>
</evidence>
<evidence type="ECO:0000256" key="2">
    <source>
        <dbReference type="SAM" id="MobiDB-lite"/>
    </source>
</evidence>
<name>DNAA_PROM9</name>
<comment type="function">
    <text evidence="1">Plays an essential role in the initiation and regulation of chromosomal replication. ATP-DnaA binds to the origin of replication (oriC) to initiate formation of the DNA replication initiation complex once per cell cycle. Binds the DnaA box (a 9 base pair repeat at the origin) and separates the double-stranded (ds)DNA. Forms a right-handed helical filament on oriC DNA; dsDNA binds to the exterior of the filament while single-stranded (ss)DNA is stabiized in the filament's interior. The ATP-DnaA-oriC complex binds and stabilizes one strand of the AT-rich DNA unwinding element (DUE), permitting loading of DNA polymerase. After initiation quickly degrades to an ADP-DnaA complex that is not apt for DNA replication. Binds acidic phospholipids.</text>
</comment>
<comment type="subunit">
    <text evidence="1">Oligomerizes as a right-handed, spiral filament on DNA at oriC.</text>
</comment>
<comment type="subcellular location">
    <subcellularLocation>
        <location evidence="1">Cytoplasm</location>
    </subcellularLocation>
</comment>
<comment type="domain">
    <text evidence="1">Domain I is involved in oligomerization and binding regulators, domain II is flexibile and of varying length in different bacteria, domain III forms the AAA+ region, while domain IV binds dsDNA.</text>
</comment>
<comment type="similarity">
    <text evidence="1">Belongs to the DnaA family.</text>
</comment>
<dbReference type="EMBL" id="CP000111">
    <property type="protein sequence ID" value="ABB49626.1"/>
    <property type="molecule type" value="Genomic_DNA"/>
</dbReference>
<dbReference type="RefSeq" id="WP_011376121.1">
    <property type="nucleotide sequence ID" value="NC_007577.1"/>
</dbReference>
<dbReference type="SMR" id="Q31BW9"/>
<dbReference type="STRING" id="74546.PMT9312_0565"/>
<dbReference type="KEGG" id="pmi:PMT9312_0565"/>
<dbReference type="eggNOG" id="COG0593">
    <property type="taxonomic scope" value="Bacteria"/>
</dbReference>
<dbReference type="HOGENOM" id="CLU_026910_3_1_3"/>
<dbReference type="OrthoDB" id="9807019at2"/>
<dbReference type="Proteomes" id="UP000002715">
    <property type="component" value="Chromosome"/>
</dbReference>
<dbReference type="GO" id="GO:0005737">
    <property type="term" value="C:cytoplasm"/>
    <property type="evidence" value="ECO:0007669"/>
    <property type="project" value="UniProtKB-SubCell"/>
</dbReference>
<dbReference type="GO" id="GO:0005886">
    <property type="term" value="C:plasma membrane"/>
    <property type="evidence" value="ECO:0007669"/>
    <property type="project" value="TreeGrafter"/>
</dbReference>
<dbReference type="GO" id="GO:0005524">
    <property type="term" value="F:ATP binding"/>
    <property type="evidence" value="ECO:0007669"/>
    <property type="project" value="UniProtKB-UniRule"/>
</dbReference>
<dbReference type="GO" id="GO:0016887">
    <property type="term" value="F:ATP hydrolysis activity"/>
    <property type="evidence" value="ECO:0007669"/>
    <property type="project" value="InterPro"/>
</dbReference>
<dbReference type="GO" id="GO:0003688">
    <property type="term" value="F:DNA replication origin binding"/>
    <property type="evidence" value="ECO:0007669"/>
    <property type="project" value="UniProtKB-UniRule"/>
</dbReference>
<dbReference type="GO" id="GO:0008289">
    <property type="term" value="F:lipid binding"/>
    <property type="evidence" value="ECO:0007669"/>
    <property type="project" value="UniProtKB-KW"/>
</dbReference>
<dbReference type="GO" id="GO:0006270">
    <property type="term" value="P:DNA replication initiation"/>
    <property type="evidence" value="ECO:0007669"/>
    <property type="project" value="UniProtKB-UniRule"/>
</dbReference>
<dbReference type="GO" id="GO:0006275">
    <property type="term" value="P:regulation of DNA replication"/>
    <property type="evidence" value="ECO:0007669"/>
    <property type="project" value="UniProtKB-UniRule"/>
</dbReference>
<dbReference type="CDD" id="cd00009">
    <property type="entry name" value="AAA"/>
    <property type="match status" value="1"/>
</dbReference>
<dbReference type="CDD" id="cd06571">
    <property type="entry name" value="Bac_DnaA_C"/>
    <property type="match status" value="1"/>
</dbReference>
<dbReference type="FunFam" id="3.40.50.300:FF:000668">
    <property type="entry name" value="Chromosomal replication initiator protein DnaA"/>
    <property type="match status" value="1"/>
</dbReference>
<dbReference type="Gene3D" id="1.10.1750.10">
    <property type="match status" value="1"/>
</dbReference>
<dbReference type="Gene3D" id="1.10.8.60">
    <property type="match status" value="1"/>
</dbReference>
<dbReference type="Gene3D" id="3.30.300.180">
    <property type="match status" value="1"/>
</dbReference>
<dbReference type="Gene3D" id="3.40.50.300">
    <property type="entry name" value="P-loop containing nucleotide triphosphate hydrolases"/>
    <property type="match status" value="1"/>
</dbReference>
<dbReference type="HAMAP" id="MF_00377">
    <property type="entry name" value="DnaA_bact"/>
    <property type="match status" value="1"/>
</dbReference>
<dbReference type="InterPro" id="IPR003593">
    <property type="entry name" value="AAA+_ATPase"/>
</dbReference>
<dbReference type="InterPro" id="IPR001957">
    <property type="entry name" value="Chromosome_initiator_DnaA"/>
</dbReference>
<dbReference type="InterPro" id="IPR020591">
    <property type="entry name" value="Chromosome_initiator_DnaA-like"/>
</dbReference>
<dbReference type="InterPro" id="IPR018312">
    <property type="entry name" value="Chromosome_initiator_DnaA_CS"/>
</dbReference>
<dbReference type="InterPro" id="IPR013159">
    <property type="entry name" value="DnaA_C"/>
</dbReference>
<dbReference type="InterPro" id="IPR013317">
    <property type="entry name" value="DnaA_dom"/>
</dbReference>
<dbReference type="InterPro" id="IPR024633">
    <property type="entry name" value="DnaA_N_dom"/>
</dbReference>
<dbReference type="InterPro" id="IPR038454">
    <property type="entry name" value="DnaA_N_sf"/>
</dbReference>
<dbReference type="InterPro" id="IPR027417">
    <property type="entry name" value="P-loop_NTPase"/>
</dbReference>
<dbReference type="InterPro" id="IPR010921">
    <property type="entry name" value="Trp_repressor/repl_initiator"/>
</dbReference>
<dbReference type="NCBIfam" id="TIGR00362">
    <property type="entry name" value="DnaA"/>
    <property type="match status" value="1"/>
</dbReference>
<dbReference type="PANTHER" id="PTHR30050">
    <property type="entry name" value="CHROMOSOMAL REPLICATION INITIATOR PROTEIN DNAA"/>
    <property type="match status" value="1"/>
</dbReference>
<dbReference type="PANTHER" id="PTHR30050:SF2">
    <property type="entry name" value="CHROMOSOMAL REPLICATION INITIATOR PROTEIN DNAA"/>
    <property type="match status" value="1"/>
</dbReference>
<dbReference type="Pfam" id="PF00308">
    <property type="entry name" value="Bac_DnaA"/>
    <property type="match status" value="1"/>
</dbReference>
<dbReference type="Pfam" id="PF08299">
    <property type="entry name" value="Bac_DnaA_C"/>
    <property type="match status" value="1"/>
</dbReference>
<dbReference type="Pfam" id="PF11638">
    <property type="entry name" value="DnaA_N"/>
    <property type="match status" value="1"/>
</dbReference>
<dbReference type="PRINTS" id="PR00051">
    <property type="entry name" value="DNAA"/>
</dbReference>
<dbReference type="SMART" id="SM00382">
    <property type="entry name" value="AAA"/>
    <property type="match status" value="1"/>
</dbReference>
<dbReference type="SMART" id="SM00760">
    <property type="entry name" value="Bac_DnaA_C"/>
    <property type="match status" value="1"/>
</dbReference>
<dbReference type="SUPFAM" id="SSF52540">
    <property type="entry name" value="P-loop containing nucleoside triphosphate hydrolases"/>
    <property type="match status" value="1"/>
</dbReference>
<dbReference type="SUPFAM" id="SSF48295">
    <property type="entry name" value="TrpR-like"/>
    <property type="match status" value="1"/>
</dbReference>
<dbReference type="PROSITE" id="PS01008">
    <property type="entry name" value="DNAA"/>
    <property type="match status" value="1"/>
</dbReference>
<gene>
    <name evidence="1" type="primary">dnaA</name>
    <name type="ordered locus">PMT9312_0565</name>
</gene>
<feature type="chain" id="PRO_1000048689" description="Chromosomal replication initiator protein DnaA">
    <location>
        <begin position="1"/>
        <end position="464"/>
    </location>
</feature>
<feature type="region of interest" description="Domain I, interacts with DnaA modulators" evidence="1">
    <location>
        <begin position="1"/>
        <end position="79"/>
    </location>
</feature>
<feature type="region of interest" description="Domain II" evidence="1">
    <location>
        <begin position="79"/>
        <end position="123"/>
    </location>
</feature>
<feature type="region of interest" description="Disordered" evidence="2">
    <location>
        <begin position="99"/>
        <end position="120"/>
    </location>
</feature>
<feature type="region of interest" description="Domain III, AAA+ region" evidence="1">
    <location>
        <begin position="124"/>
        <end position="340"/>
    </location>
</feature>
<feature type="region of interest" description="Domain IV, binds dsDNA" evidence="1">
    <location>
        <begin position="341"/>
        <end position="464"/>
    </location>
</feature>
<feature type="compositionally biased region" description="Polar residues" evidence="2">
    <location>
        <begin position="105"/>
        <end position="116"/>
    </location>
</feature>
<feature type="binding site" evidence="1">
    <location>
        <position position="168"/>
    </location>
    <ligand>
        <name>ATP</name>
        <dbReference type="ChEBI" id="CHEBI:30616"/>
    </ligand>
</feature>
<feature type="binding site" evidence="1">
    <location>
        <position position="170"/>
    </location>
    <ligand>
        <name>ATP</name>
        <dbReference type="ChEBI" id="CHEBI:30616"/>
    </ligand>
</feature>
<feature type="binding site" evidence="1">
    <location>
        <position position="171"/>
    </location>
    <ligand>
        <name>ATP</name>
        <dbReference type="ChEBI" id="CHEBI:30616"/>
    </ligand>
</feature>
<feature type="binding site" evidence="1">
    <location>
        <position position="172"/>
    </location>
    <ligand>
        <name>ATP</name>
        <dbReference type="ChEBI" id="CHEBI:30616"/>
    </ligand>
</feature>
<reference key="1">
    <citation type="journal article" date="2006" name="Science">
        <title>Genomic islands and the ecology and evolution of Prochlorococcus.</title>
        <authorList>
            <person name="Coleman M.L."/>
            <person name="Sullivan M.B."/>
            <person name="Martiny A.C."/>
            <person name="Steglich C."/>
            <person name="Barry K."/>
            <person name="Delong E.F."/>
            <person name="Chisholm S.W."/>
        </authorList>
    </citation>
    <scope>NUCLEOTIDE SEQUENCE [LARGE SCALE GENOMIC DNA]</scope>
    <source>
        <strain>MIT 9312</strain>
    </source>
</reference>
<proteinExistence type="inferred from homology"/>
<protein>
    <recommendedName>
        <fullName evidence="1">Chromosomal replication initiator protein DnaA</fullName>
    </recommendedName>
</protein>